<protein>
    <recommendedName>
        <fullName>LIM/homeobox protein Lhx2</fullName>
        <shortName>Homeobox protein LH-2</shortName>
        <shortName>LIM homeobox protein 2</shortName>
    </recommendedName>
</protein>
<comment type="function">
    <text evidence="1">Acts as a transcriptional activator. Stimulates the promoter of the alpha-glycoprotein gene. Transcriptional regulatory protein involved in the control of cell differentiation in developing lymphoid and neural cell types (By similarity).</text>
</comment>
<comment type="subunit">
    <text evidence="2">Interacts (via LIM domains) with CITED2. Interacts with POU4F2.</text>
</comment>
<comment type="subcellular location">
    <subcellularLocation>
        <location evidence="7">Nucleus</location>
    </subcellularLocation>
</comment>
<comment type="tissue specificity">
    <text>Found in discrete regions of the developing CNS, primarily in diencephalic and telencephalic structures and a subset of lymphoid tissues. Also found in embryonic spinal cord and fetal liver.</text>
</comment>
<comment type="developmental stage">
    <text>Expressed in developing lymphocytes and neural cells. Maximal expression is found in pre-B-lymphocytes.</text>
</comment>
<comment type="domain">
    <text evidence="1">LIM domains are necessary for transcription activation.</text>
</comment>
<keyword id="KW-0010">Activator</keyword>
<keyword id="KW-0238">DNA-binding</keyword>
<keyword id="KW-0371">Homeobox</keyword>
<keyword id="KW-0440">LIM domain</keyword>
<keyword id="KW-0479">Metal-binding</keyword>
<keyword id="KW-0539">Nucleus</keyword>
<keyword id="KW-1185">Reference proteome</keyword>
<keyword id="KW-0677">Repeat</keyword>
<keyword id="KW-0804">Transcription</keyword>
<keyword id="KW-0805">Transcription regulation</keyword>
<keyword id="KW-0862">Zinc</keyword>
<name>LHX2_RAT</name>
<sequence>MLFHSLSGPEVHGVIDEMDRRQERGSGISSAIDRGDTETTMPSISSDRAALCAGCGGKISDRYYLLAVDKQWHMRCLKCCECKLNLESELTCFSKDGSIYCKEDYYRRFSVQRCARCHLGISESEMVMRARDLVYHLNCFTCTTCNKMLTTGDHFGMKDSLVYCRLHFEALLQGEYPPHFNHADVARAAAAAEQLRVQDWAQLGLTLGLPYYNGVGTVQKGRPRKRKSPGPGADLAAYNAALSCNENDAEHLDRDQPYPSSQKTKRMRTSFKHHQLRTMKSYFAINHNPDAKDLKQLAQKTGLTKRVLQVWFQNARAKFRRNLLRQENTGVDKTSDATLQTGTPSGPASELSNASLSPSSTPTTLTDLTSPTLPTVTSVLTSVPGNLEATSPTALHKRLLPTFSNDSPPPSPLSPHDFFKKEIIFS</sequence>
<evidence type="ECO:0000250" key="1"/>
<evidence type="ECO:0000250" key="2">
    <source>
        <dbReference type="UniProtKB" id="Q9Z0S2"/>
    </source>
</evidence>
<evidence type="ECO:0000255" key="3"/>
<evidence type="ECO:0000255" key="4">
    <source>
        <dbReference type="PROSITE-ProRule" id="PRU00108"/>
    </source>
</evidence>
<evidence type="ECO:0000255" key="5">
    <source>
        <dbReference type="PROSITE-ProRule" id="PRU00125"/>
    </source>
</evidence>
<evidence type="ECO:0000256" key="6">
    <source>
        <dbReference type="SAM" id="MobiDB-lite"/>
    </source>
</evidence>
<evidence type="ECO:0000305" key="7"/>
<reference key="1">
    <citation type="journal article" date="1993" name="Proc. Natl. Acad. Sci. U.S.A.">
        <title>LH-2: a LIM/homeodomain gene expressed in developing lymphocytes and neural cells.</title>
        <authorList>
            <person name="Xu Y."/>
            <person name="Baldassare M."/>
            <person name="Fisher P."/>
            <person name="Rathbun G."/>
            <person name="Oltz E.M."/>
            <person name="Yancopoulos G.D."/>
            <person name="Jessell T.M."/>
            <person name="Alt F.W."/>
        </authorList>
    </citation>
    <scope>NUCLEOTIDE SEQUENCE [MRNA]</scope>
    <source>
        <tissue>Brain</tissue>
    </source>
</reference>
<feature type="chain" id="PRO_0000075780" description="LIM/homeobox protein Lhx2">
    <location>
        <begin position="1"/>
        <end position="426"/>
    </location>
</feature>
<feature type="domain" description="LIM zinc-binding 1" evidence="5">
    <location>
        <begin position="52"/>
        <end position="104"/>
    </location>
</feature>
<feature type="domain" description="LIM zinc-binding 2" evidence="5">
    <location>
        <begin position="114"/>
        <end position="167"/>
    </location>
</feature>
<feature type="DNA-binding region" description="Homeobox" evidence="4">
    <location>
        <begin position="264"/>
        <end position="323"/>
    </location>
</feature>
<feature type="region of interest" description="Disordered" evidence="6">
    <location>
        <begin position="14"/>
        <end position="42"/>
    </location>
</feature>
<feature type="region of interest" description="Disordered" evidence="6">
    <location>
        <begin position="248"/>
        <end position="268"/>
    </location>
</feature>
<feature type="region of interest" description="Disordered" evidence="6">
    <location>
        <begin position="326"/>
        <end position="370"/>
    </location>
</feature>
<feature type="short sequence motif" description="Nuclear localization signal" evidence="3">
    <location>
        <begin position="305"/>
        <end position="321"/>
    </location>
</feature>
<feature type="compositionally biased region" description="Basic and acidic residues" evidence="6">
    <location>
        <begin position="14"/>
        <end position="24"/>
    </location>
</feature>
<feature type="compositionally biased region" description="Polar residues" evidence="6">
    <location>
        <begin position="326"/>
        <end position="354"/>
    </location>
</feature>
<feature type="compositionally biased region" description="Low complexity" evidence="6">
    <location>
        <begin position="355"/>
        <end position="370"/>
    </location>
</feature>
<gene>
    <name type="primary">Lhx2</name>
    <name type="synonym">Lh2</name>
</gene>
<accession>P36198</accession>
<organism>
    <name type="scientific">Rattus norvegicus</name>
    <name type="common">Rat</name>
    <dbReference type="NCBI Taxonomy" id="10116"/>
    <lineage>
        <taxon>Eukaryota</taxon>
        <taxon>Metazoa</taxon>
        <taxon>Chordata</taxon>
        <taxon>Craniata</taxon>
        <taxon>Vertebrata</taxon>
        <taxon>Euteleostomi</taxon>
        <taxon>Mammalia</taxon>
        <taxon>Eutheria</taxon>
        <taxon>Euarchontoglires</taxon>
        <taxon>Glires</taxon>
        <taxon>Rodentia</taxon>
        <taxon>Myomorpha</taxon>
        <taxon>Muroidea</taxon>
        <taxon>Muridae</taxon>
        <taxon>Murinae</taxon>
        <taxon>Rattus</taxon>
    </lineage>
</organism>
<proteinExistence type="evidence at transcript level"/>
<dbReference type="EMBL" id="L06804">
    <property type="status" value="NOT_ANNOTATED_CDS"/>
    <property type="molecule type" value="mRNA"/>
</dbReference>
<dbReference type="PIR" id="A47179">
    <property type="entry name" value="A47179"/>
</dbReference>
<dbReference type="SMR" id="P36198"/>
<dbReference type="FunCoup" id="P36198">
    <property type="interactions" value="509"/>
</dbReference>
<dbReference type="STRING" id="10116.ENSRNOP00000014452"/>
<dbReference type="PhosphoSitePlus" id="P36198"/>
<dbReference type="PaxDb" id="10116-ENSRNOP00000014452"/>
<dbReference type="UCSC" id="RGD:71076">
    <property type="organism name" value="rat"/>
</dbReference>
<dbReference type="AGR" id="RGD:71076"/>
<dbReference type="RGD" id="71076">
    <property type="gene designation" value="Lhx2"/>
</dbReference>
<dbReference type="eggNOG" id="KOG0490">
    <property type="taxonomic scope" value="Eukaryota"/>
</dbReference>
<dbReference type="InParanoid" id="P36198"/>
<dbReference type="PhylomeDB" id="P36198"/>
<dbReference type="PRO" id="PR:P36198"/>
<dbReference type="Proteomes" id="UP000002494">
    <property type="component" value="Unplaced"/>
</dbReference>
<dbReference type="GO" id="GO:0005634">
    <property type="term" value="C:nucleus"/>
    <property type="evidence" value="ECO:0000266"/>
    <property type="project" value="RGD"/>
</dbReference>
<dbReference type="GO" id="GO:0003682">
    <property type="term" value="F:chromatin binding"/>
    <property type="evidence" value="ECO:0000266"/>
    <property type="project" value="RGD"/>
</dbReference>
<dbReference type="GO" id="GO:0001228">
    <property type="term" value="F:DNA-binding transcription activator activity, RNA polymerase II-specific"/>
    <property type="evidence" value="ECO:0000266"/>
    <property type="project" value="RGD"/>
</dbReference>
<dbReference type="GO" id="GO:0000981">
    <property type="term" value="F:DNA-binding transcription factor activity, RNA polymerase II-specific"/>
    <property type="evidence" value="ECO:0000318"/>
    <property type="project" value="GO_Central"/>
</dbReference>
<dbReference type="GO" id="GO:0046872">
    <property type="term" value="F:metal ion binding"/>
    <property type="evidence" value="ECO:0007669"/>
    <property type="project" value="UniProtKB-KW"/>
</dbReference>
<dbReference type="GO" id="GO:0000978">
    <property type="term" value="F:RNA polymerase II cis-regulatory region sequence-specific DNA binding"/>
    <property type="evidence" value="ECO:0000266"/>
    <property type="project" value="RGD"/>
</dbReference>
<dbReference type="GO" id="GO:0000977">
    <property type="term" value="F:RNA polymerase II transcription regulatory region sequence-specific DNA binding"/>
    <property type="evidence" value="ECO:0000318"/>
    <property type="project" value="GO_Central"/>
</dbReference>
<dbReference type="GO" id="GO:0043565">
    <property type="term" value="F:sequence-specific DNA binding"/>
    <property type="evidence" value="ECO:0000266"/>
    <property type="project" value="RGD"/>
</dbReference>
<dbReference type="GO" id="GO:0048646">
    <property type="term" value="P:anatomical structure formation involved in morphogenesis"/>
    <property type="evidence" value="ECO:0000266"/>
    <property type="project" value="RGD"/>
</dbReference>
<dbReference type="GO" id="GO:0048675">
    <property type="term" value="P:axon extension"/>
    <property type="evidence" value="ECO:0000266"/>
    <property type="project" value="RGD"/>
</dbReference>
<dbReference type="GO" id="GO:0007411">
    <property type="term" value="P:axon guidance"/>
    <property type="evidence" value="ECO:0000266"/>
    <property type="project" value="RGD"/>
</dbReference>
<dbReference type="GO" id="GO:0007420">
    <property type="term" value="P:brain development"/>
    <property type="evidence" value="ECO:0000266"/>
    <property type="project" value="RGD"/>
</dbReference>
<dbReference type="GO" id="GO:0021987">
    <property type="term" value="P:cerebral cortex development"/>
    <property type="evidence" value="ECO:0000266"/>
    <property type="project" value="RGD"/>
</dbReference>
<dbReference type="GO" id="GO:0009953">
    <property type="term" value="P:dorsal/ventral pattern formation"/>
    <property type="evidence" value="ECO:0000266"/>
    <property type="project" value="RGD"/>
</dbReference>
<dbReference type="GO" id="GO:0001942">
    <property type="term" value="P:hair follicle development"/>
    <property type="evidence" value="ECO:0000266"/>
    <property type="project" value="RGD"/>
</dbReference>
<dbReference type="GO" id="GO:0045199">
    <property type="term" value="P:maintenance of epithelial cell apical/basal polarity"/>
    <property type="evidence" value="ECO:0000266"/>
    <property type="project" value="RGD"/>
</dbReference>
<dbReference type="GO" id="GO:0007498">
    <property type="term" value="P:mesoderm development"/>
    <property type="evidence" value="ECO:0000266"/>
    <property type="project" value="RGD"/>
</dbReference>
<dbReference type="GO" id="GO:0045814">
    <property type="term" value="P:negative regulation of gene expression, epigenetic"/>
    <property type="evidence" value="ECO:0000266"/>
    <property type="project" value="RGD"/>
</dbReference>
<dbReference type="GO" id="GO:0050768">
    <property type="term" value="P:negative regulation of neurogenesis"/>
    <property type="evidence" value="ECO:0000266"/>
    <property type="project" value="RGD"/>
</dbReference>
<dbReference type="GO" id="GO:0007399">
    <property type="term" value="P:nervous system development"/>
    <property type="evidence" value="ECO:0000266"/>
    <property type="project" value="RGD"/>
</dbReference>
<dbReference type="GO" id="GO:0001843">
    <property type="term" value="P:neural tube closure"/>
    <property type="evidence" value="ECO:0000266"/>
    <property type="project" value="RGD"/>
</dbReference>
<dbReference type="GO" id="GO:0022008">
    <property type="term" value="P:neurogenesis"/>
    <property type="evidence" value="ECO:0000266"/>
    <property type="project" value="RGD"/>
</dbReference>
<dbReference type="GO" id="GO:0030182">
    <property type="term" value="P:neuron differentiation"/>
    <property type="evidence" value="ECO:0000270"/>
    <property type="project" value="RGD"/>
</dbReference>
<dbReference type="GO" id="GO:0021772">
    <property type="term" value="P:olfactory bulb development"/>
    <property type="evidence" value="ECO:0000266"/>
    <property type="project" value="RGD"/>
</dbReference>
<dbReference type="GO" id="GO:0045893">
    <property type="term" value="P:positive regulation of DNA-templated transcription"/>
    <property type="evidence" value="ECO:0000250"/>
    <property type="project" value="UniProtKB"/>
</dbReference>
<dbReference type="GO" id="GO:2000179">
    <property type="term" value="P:positive regulation of neural precursor cell proliferation"/>
    <property type="evidence" value="ECO:0000266"/>
    <property type="project" value="RGD"/>
</dbReference>
<dbReference type="GO" id="GO:0045944">
    <property type="term" value="P:positive regulation of transcription by RNA polymerase II"/>
    <property type="evidence" value="ECO:0000266"/>
    <property type="project" value="RGD"/>
</dbReference>
<dbReference type="GO" id="GO:0006357">
    <property type="term" value="P:regulation of transcription by RNA polymerase II"/>
    <property type="evidence" value="ECO:0000266"/>
    <property type="project" value="RGD"/>
</dbReference>
<dbReference type="GO" id="GO:0060041">
    <property type="term" value="P:retina development in camera-type eye"/>
    <property type="evidence" value="ECO:0000266"/>
    <property type="project" value="RGD"/>
</dbReference>
<dbReference type="GO" id="GO:0021537">
    <property type="term" value="P:telencephalon development"/>
    <property type="evidence" value="ECO:0000266"/>
    <property type="project" value="RGD"/>
</dbReference>
<dbReference type="GO" id="GO:0021978">
    <property type="term" value="P:telencephalon regionalization"/>
    <property type="evidence" value="ECO:0000266"/>
    <property type="project" value="RGD"/>
</dbReference>
<dbReference type="CDD" id="cd00086">
    <property type="entry name" value="homeodomain"/>
    <property type="match status" value="1"/>
</dbReference>
<dbReference type="CDD" id="cd09469">
    <property type="entry name" value="LIM1_Lhx2"/>
    <property type="match status" value="1"/>
</dbReference>
<dbReference type="CDD" id="cd09377">
    <property type="entry name" value="LIM2_Lhx2_Lhx9"/>
    <property type="match status" value="1"/>
</dbReference>
<dbReference type="FunFam" id="1.10.10.60:FF:000027">
    <property type="entry name" value="LIM/homeobox protein Lhx9"/>
    <property type="match status" value="1"/>
</dbReference>
<dbReference type="FunFam" id="2.10.110.10:FF:000039">
    <property type="entry name" value="LIM/homeobox protein Lhx9 isoform 2"/>
    <property type="match status" value="1"/>
</dbReference>
<dbReference type="FunFam" id="2.10.110.10:FF:000033">
    <property type="entry name" value="LIM/homeobox protein Lhx9 isoform X2"/>
    <property type="match status" value="1"/>
</dbReference>
<dbReference type="Gene3D" id="2.10.110.10">
    <property type="entry name" value="Cysteine Rich Protein"/>
    <property type="match status" value="2"/>
</dbReference>
<dbReference type="Gene3D" id="1.10.10.60">
    <property type="entry name" value="Homeodomain-like"/>
    <property type="match status" value="1"/>
</dbReference>
<dbReference type="InterPro" id="IPR001356">
    <property type="entry name" value="HD"/>
</dbReference>
<dbReference type="InterPro" id="IPR017970">
    <property type="entry name" value="Homeobox_CS"/>
</dbReference>
<dbReference type="InterPro" id="IPR009057">
    <property type="entry name" value="Homeodomain-like_sf"/>
</dbReference>
<dbReference type="InterPro" id="IPR050453">
    <property type="entry name" value="LIM_Homeobox_TF"/>
</dbReference>
<dbReference type="InterPro" id="IPR001781">
    <property type="entry name" value="Znf_LIM"/>
</dbReference>
<dbReference type="PANTHER" id="PTHR24208">
    <property type="entry name" value="LIM/HOMEOBOX PROTEIN LHX"/>
    <property type="match status" value="1"/>
</dbReference>
<dbReference type="PANTHER" id="PTHR24208:SF80">
    <property type="entry name" value="LIM_HOMEOBOX PROTEIN LHX2"/>
    <property type="match status" value="1"/>
</dbReference>
<dbReference type="Pfam" id="PF00046">
    <property type="entry name" value="Homeodomain"/>
    <property type="match status" value="1"/>
</dbReference>
<dbReference type="Pfam" id="PF00412">
    <property type="entry name" value="LIM"/>
    <property type="match status" value="2"/>
</dbReference>
<dbReference type="SMART" id="SM00389">
    <property type="entry name" value="HOX"/>
    <property type="match status" value="1"/>
</dbReference>
<dbReference type="SMART" id="SM00132">
    <property type="entry name" value="LIM"/>
    <property type="match status" value="2"/>
</dbReference>
<dbReference type="SUPFAM" id="SSF57716">
    <property type="entry name" value="Glucocorticoid receptor-like (DNA-binding domain)"/>
    <property type="match status" value="2"/>
</dbReference>
<dbReference type="SUPFAM" id="SSF46689">
    <property type="entry name" value="Homeodomain-like"/>
    <property type="match status" value="1"/>
</dbReference>
<dbReference type="PROSITE" id="PS00027">
    <property type="entry name" value="HOMEOBOX_1"/>
    <property type="match status" value="1"/>
</dbReference>
<dbReference type="PROSITE" id="PS50071">
    <property type="entry name" value="HOMEOBOX_2"/>
    <property type="match status" value="1"/>
</dbReference>
<dbReference type="PROSITE" id="PS00478">
    <property type="entry name" value="LIM_DOMAIN_1"/>
    <property type="match status" value="2"/>
</dbReference>
<dbReference type="PROSITE" id="PS50023">
    <property type="entry name" value="LIM_DOMAIN_2"/>
    <property type="match status" value="2"/>
</dbReference>